<comment type="function">
    <text evidence="1">Key regulator of mitochondrial calcium uniporter (MCU) required for calcium entry into mitochondrion. Plays a direct role in uniporter-mediated calcium uptake via a direct interaction with MCU. Probably involved in the assembly of the membrane components of the uniporter complex (uniplex).</text>
</comment>
<comment type="subunit">
    <text evidence="1">Interacts (via coiled coil regions) with MCU; the interaction is direct. Interacts with SMDT1/EMRE; the interaction is direct. Interacts with PPIF.</text>
</comment>
<comment type="subcellular location">
    <subcellularLocation>
        <location evidence="1">Mitochondrion inner membrane</location>
        <topology evidence="1">Multi-pass membrane protein</topology>
    </subcellularLocation>
</comment>
<comment type="alternative products">
    <event type="alternative splicing"/>
    <isoform>
        <id>Q9CXD6-1</id>
        <name>1</name>
        <sequence type="displayed"/>
    </isoform>
    <isoform>
        <id>Q9CXD6-2</id>
        <name>2</name>
        <sequence type="described" ref="VSP_027001 VSP_027002"/>
    </isoform>
    <isoform>
        <id>Q9CXD6-3</id>
        <name>3</name>
        <sequence type="described" ref="VSP_027000"/>
    </isoform>
</comment>
<comment type="disruption phenotype">
    <text evidence="4">Conditional knockout mice lacking Mcur1 in cardiomyocytes and endothelial cells are viable and are born at the expected Mendelian. They however show impaired mitochondrial calcium uptake and mitochondrial calcium uniporter (MCU) current.</text>
</comment>
<comment type="similarity">
    <text evidence="7">Belongs to the CCDC90 family.</text>
</comment>
<dbReference type="EMBL" id="AK018089">
    <property type="protein sequence ID" value="BAB31065.1"/>
    <property type="molecule type" value="mRNA"/>
</dbReference>
<dbReference type="EMBL" id="AK041849">
    <property type="protein sequence ID" value="BAE20607.1"/>
    <property type="molecule type" value="mRNA"/>
</dbReference>
<dbReference type="EMBL" id="BC113195">
    <property type="protein sequence ID" value="AAI13196.1"/>
    <property type="molecule type" value="mRNA"/>
</dbReference>
<dbReference type="CCDS" id="CCDS36645.1">
    <molecule id="Q9CXD6-1"/>
</dbReference>
<dbReference type="RefSeq" id="NP_001074528.1">
    <molecule id="Q9CXD6-1"/>
    <property type="nucleotide sequence ID" value="NM_001081059.3"/>
</dbReference>
<dbReference type="SMR" id="Q9CXD6"/>
<dbReference type="BioGRID" id="217986">
    <property type="interactions" value="3"/>
</dbReference>
<dbReference type="FunCoup" id="Q9CXD6">
    <property type="interactions" value="1142"/>
</dbReference>
<dbReference type="STRING" id="10090.ENSMUSP00000021800"/>
<dbReference type="iPTMnet" id="Q9CXD6"/>
<dbReference type="PhosphoSitePlus" id="Q9CXD6"/>
<dbReference type="jPOST" id="Q9CXD6"/>
<dbReference type="PaxDb" id="10090-ENSMUSP00000021800"/>
<dbReference type="PeptideAtlas" id="Q9CXD6"/>
<dbReference type="ProteomicsDB" id="292283">
    <molecule id="Q9CXD6-1"/>
</dbReference>
<dbReference type="ProteomicsDB" id="292284">
    <molecule id="Q9CXD6-2"/>
</dbReference>
<dbReference type="ProteomicsDB" id="292285">
    <molecule id="Q9CXD6-3"/>
</dbReference>
<dbReference type="Pumba" id="Q9CXD6"/>
<dbReference type="Antibodypedia" id="25007">
    <property type="antibodies" value="70 antibodies from 19 providers"/>
</dbReference>
<dbReference type="Ensembl" id="ENSMUST00000021800.6">
    <molecule id="Q9CXD6-1"/>
    <property type="protein sequence ID" value="ENSMUSP00000021800.5"/>
    <property type="gene ID" value="ENSMUSG00000021371.6"/>
</dbReference>
<dbReference type="GeneID" id="76137"/>
<dbReference type="KEGG" id="mmu:76137"/>
<dbReference type="UCSC" id="uc007qgf.2">
    <molecule id="Q9CXD6-1"/>
    <property type="organism name" value="mouse"/>
</dbReference>
<dbReference type="UCSC" id="uc007qgg.2">
    <molecule id="Q9CXD6-2"/>
    <property type="organism name" value="mouse"/>
</dbReference>
<dbReference type="AGR" id="MGI:1923387"/>
<dbReference type="CTD" id="63933"/>
<dbReference type="MGI" id="MGI:1923387">
    <property type="gene designation" value="Mcur1"/>
</dbReference>
<dbReference type="VEuPathDB" id="HostDB:ENSMUSG00000021371"/>
<dbReference type="eggNOG" id="KOG3156">
    <property type="taxonomic scope" value="Eukaryota"/>
</dbReference>
<dbReference type="GeneTree" id="ENSGT00940000158957"/>
<dbReference type="HOGENOM" id="CLU_791208_0_0_1"/>
<dbReference type="InParanoid" id="Q9CXD6"/>
<dbReference type="OMA" id="LASSSRX"/>
<dbReference type="OrthoDB" id="889336at2759"/>
<dbReference type="PhylomeDB" id="Q9CXD6"/>
<dbReference type="TreeFam" id="TF331442"/>
<dbReference type="BioGRID-ORCS" id="76137">
    <property type="hits" value="3 hits in 76 CRISPR screens"/>
</dbReference>
<dbReference type="ChiTaRS" id="Mcur1">
    <property type="organism name" value="mouse"/>
</dbReference>
<dbReference type="PRO" id="PR:Q9CXD6"/>
<dbReference type="Proteomes" id="UP000000589">
    <property type="component" value="Chromosome 13"/>
</dbReference>
<dbReference type="RNAct" id="Q9CXD6">
    <property type="molecule type" value="protein"/>
</dbReference>
<dbReference type="Bgee" id="ENSMUSG00000021371">
    <property type="expression patterns" value="Expressed in brown adipose tissue and 217 other cell types or tissues"/>
</dbReference>
<dbReference type="GO" id="GO:0005743">
    <property type="term" value="C:mitochondrial inner membrane"/>
    <property type="evidence" value="ECO:0000250"/>
    <property type="project" value="UniProtKB"/>
</dbReference>
<dbReference type="GO" id="GO:0044877">
    <property type="term" value="F:protein-containing complex binding"/>
    <property type="evidence" value="ECO:0000314"/>
    <property type="project" value="MGI"/>
</dbReference>
<dbReference type="GO" id="GO:0030674">
    <property type="term" value="F:protein-macromolecule adaptor activity"/>
    <property type="evidence" value="ECO:0000314"/>
    <property type="project" value="MGI"/>
</dbReference>
<dbReference type="GO" id="GO:0036444">
    <property type="term" value="P:calcium import into the mitochondrion"/>
    <property type="evidence" value="ECO:0000250"/>
    <property type="project" value="UniProtKB"/>
</dbReference>
<dbReference type="GO" id="GO:0070509">
    <property type="term" value="P:calcium ion import"/>
    <property type="evidence" value="ECO:0000315"/>
    <property type="project" value="MGI"/>
</dbReference>
<dbReference type="GO" id="GO:0070588">
    <property type="term" value="P:calcium ion transmembrane transport"/>
    <property type="evidence" value="ECO:0000315"/>
    <property type="project" value="MGI"/>
</dbReference>
<dbReference type="GO" id="GO:0016477">
    <property type="term" value="P:cell migration"/>
    <property type="evidence" value="ECO:0000315"/>
    <property type="project" value="MGI"/>
</dbReference>
<dbReference type="GO" id="GO:0008283">
    <property type="term" value="P:cell population proliferation"/>
    <property type="evidence" value="ECO:0000315"/>
    <property type="project" value="MGI"/>
</dbReference>
<dbReference type="GO" id="GO:0051649">
    <property type="term" value="P:establishment of localization in cell"/>
    <property type="evidence" value="ECO:0000315"/>
    <property type="project" value="MGI"/>
</dbReference>
<dbReference type="GO" id="GO:0006091">
    <property type="term" value="P:generation of precursor metabolites and energy"/>
    <property type="evidence" value="ECO:0000315"/>
    <property type="project" value="MGI"/>
</dbReference>
<dbReference type="GO" id="GO:0006851">
    <property type="term" value="P:mitochondrial calcium ion transmembrane transport"/>
    <property type="evidence" value="ECO:0000250"/>
    <property type="project" value="UniProtKB"/>
</dbReference>
<dbReference type="GO" id="GO:0051561">
    <property type="term" value="P:positive regulation of mitochondrial calcium ion concentration"/>
    <property type="evidence" value="ECO:0000250"/>
    <property type="project" value="UniProtKB"/>
</dbReference>
<dbReference type="GO" id="GO:0051291">
    <property type="term" value="P:protein heterooligomerization"/>
    <property type="evidence" value="ECO:0000314"/>
    <property type="project" value="MGI"/>
</dbReference>
<dbReference type="FunFam" id="1.20.5.340:FF:000015">
    <property type="entry name" value="Mitochondrial calcium uniporter regulator 1"/>
    <property type="match status" value="1"/>
</dbReference>
<dbReference type="Gene3D" id="1.20.5.340">
    <property type="match status" value="1"/>
</dbReference>
<dbReference type="InterPro" id="IPR024461">
    <property type="entry name" value="CCDC90-like"/>
</dbReference>
<dbReference type="PANTHER" id="PTHR14360:SF11">
    <property type="entry name" value="MITOCHONDRIAL CALCIUM UNIPORTER REGULATOR 1"/>
    <property type="match status" value="1"/>
</dbReference>
<dbReference type="PANTHER" id="PTHR14360">
    <property type="entry name" value="PROTEIN FMP32, MITOCHONDRIAL"/>
    <property type="match status" value="1"/>
</dbReference>
<dbReference type="Pfam" id="PF07798">
    <property type="entry name" value="CCDC90-like"/>
    <property type="match status" value="1"/>
</dbReference>
<accession>Q9CXD6</accession>
<accession>Q14DH8</accession>
<accession>Q3V3D3</accession>
<gene>
    <name evidence="1 8" type="primary">Mcur1</name>
    <name evidence="8" type="synonym">Ccdc90a</name>
</gene>
<organism>
    <name type="scientific">Mus musculus</name>
    <name type="common">Mouse</name>
    <dbReference type="NCBI Taxonomy" id="10090"/>
    <lineage>
        <taxon>Eukaryota</taxon>
        <taxon>Metazoa</taxon>
        <taxon>Chordata</taxon>
        <taxon>Craniata</taxon>
        <taxon>Vertebrata</taxon>
        <taxon>Euteleostomi</taxon>
        <taxon>Mammalia</taxon>
        <taxon>Eutheria</taxon>
        <taxon>Euarchontoglires</taxon>
        <taxon>Glires</taxon>
        <taxon>Rodentia</taxon>
        <taxon>Myomorpha</taxon>
        <taxon>Muroidea</taxon>
        <taxon>Muridae</taxon>
        <taxon>Murinae</taxon>
        <taxon>Mus</taxon>
        <taxon>Mus</taxon>
    </lineage>
</organism>
<proteinExistence type="evidence at protein level"/>
<keyword id="KW-0007">Acetylation</keyword>
<keyword id="KW-0025">Alternative splicing</keyword>
<keyword id="KW-0106">Calcium</keyword>
<keyword id="KW-0109">Calcium transport</keyword>
<keyword id="KW-0175">Coiled coil</keyword>
<keyword id="KW-0406">Ion transport</keyword>
<keyword id="KW-0472">Membrane</keyword>
<keyword id="KW-0496">Mitochondrion</keyword>
<keyword id="KW-0999">Mitochondrion inner membrane</keyword>
<keyword id="KW-1185">Reference proteome</keyword>
<keyword id="KW-0812">Transmembrane</keyword>
<keyword id="KW-1133">Transmembrane helix</keyword>
<keyword id="KW-0813">Transport</keyword>
<evidence type="ECO:0000250" key="1">
    <source>
        <dbReference type="UniProtKB" id="Q96AQ8"/>
    </source>
</evidence>
<evidence type="ECO:0000255" key="2"/>
<evidence type="ECO:0000256" key="3">
    <source>
        <dbReference type="SAM" id="MobiDB-lite"/>
    </source>
</evidence>
<evidence type="ECO:0000269" key="4">
    <source>
    </source>
</evidence>
<evidence type="ECO:0000303" key="5">
    <source>
    </source>
</evidence>
<evidence type="ECO:0000303" key="6">
    <source>
    </source>
</evidence>
<evidence type="ECO:0000305" key="7"/>
<evidence type="ECO:0000312" key="8">
    <source>
        <dbReference type="MGI" id="MGI:1923387"/>
    </source>
</evidence>
<evidence type="ECO:0007744" key="9">
    <source>
    </source>
</evidence>
<name>MCUR1_MOUSE</name>
<sequence>MDSGSVAAERPRRTPSRQRLPSSGCGVPARPGVSTLPGGRSWLRPRGRAARASPLLFLLLVPSPRLAATATATAPRRTLAERSRPGLVLPAAALGAGRNALGRLRLGARRVAALASSRRELSLSAKCHQLEHRKENLPLSVSRQLYFDTHALVCLLEANGFTIQQAEIIVSALVKITETNMNIIYKDMVSKMQQEIALQQVLSKIANVKKDMVILEKSEFSALRAENEKIKLELHQLKQQVMDEVTKVRTDTKLNFNLEKSRVKELYSLNEKKMLELRTEIVSLHAQQDRALTQTDRKIETEVAGLKTMLEAHKLDTIKYLAGSVFTCLTVALGFYRLWI</sequence>
<reference key="1">
    <citation type="journal article" date="2005" name="Science">
        <title>The transcriptional landscape of the mammalian genome.</title>
        <authorList>
            <person name="Carninci P."/>
            <person name="Kasukawa T."/>
            <person name="Katayama S."/>
            <person name="Gough J."/>
            <person name="Frith M.C."/>
            <person name="Maeda N."/>
            <person name="Oyama R."/>
            <person name="Ravasi T."/>
            <person name="Lenhard B."/>
            <person name="Wells C."/>
            <person name="Kodzius R."/>
            <person name="Shimokawa K."/>
            <person name="Bajic V.B."/>
            <person name="Brenner S.E."/>
            <person name="Batalov S."/>
            <person name="Forrest A.R."/>
            <person name="Zavolan M."/>
            <person name="Davis M.J."/>
            <person name="Wilming L.G."/>
            <person name="Aidinis V."/>
            <person name="Allen J.E."/>
            <person name="Ambesi-Impiombato A."/>
            <person name="Apweiler R."/>
            <person name="Aturaliya R.N."/>
            <person name="Bailey T.L."/>
            <person name="Bansal M."/>
            <person name="Baxter L."/>
            <person name="Beisel K.W."/>
            <person name="Bersano T."/>
            <person name="Bono H."/>
            <person name="Chalk A.M."/>
            <person name="Chiu K.P."/>
            <person name="Choudhary V."/>
            <person name="Christoffels A."/>
            <person name="Clutterbuck D.R."/>
            <person name="Crowe M.L."/>
            <person name="Dalla E."/>
            <person name="Dalrymple B.P."/>
            <person name="de Bono B."/>
            <person name="Della Gatta G."/>
            <person name="di Bernardo D."/>
            <person name="Down T."/>
            <person name="Engstrom P."/>
            <person name="Fagiolini M."/>
            <person name="Faulkner G."/>
            <person name="Fletcher C.F."/>
            <person name="Fukushima T."/>
            <person name="Furuno M."/>
            <person name="Futaki S."/>
            <person name="Gariboldi M."/>
            <person name="Georgii-Hemming P."/>
            <person name="Gingeras T.R."/>
            <person name="Gojobori T."/>
            <person name="Green R.E."/>
            <person name="Gustincich S."/>
            <person name="Harbers M."/>
            <person name="Hayashi Y."/>
            <person name="Hensch T.K."/>
            <person name="Hirokawa N."/>
            <person name="Hill D."/>
            <person name="Huminiecki L."/>
            <person name="Iacono M."/>
            <person name="Ikeo K."/>
            <person name="Iwama A."/>
            <person name="Ishikawa T."/>
            <person name="Jakt M."/>
            <person name="Kanapin A."/>
            <person name="Katoh M."/>
            <person name="Kawasawa Y."/>
            <person name="Kelso J."/>
            <person name="Kitamura H."/>
            <person name="Kitano H."/>
            <person name="Kollias G."/>
            <person name="Krishnan S.P."/>
            <person name="Kruger A."/>
            <person name="Kummerfeld S.K."/>
            <person name="Kurochkin I.V."/>
            <person name="Lareau L.F."/>
            <person name="Lazarevic D."/>
            <person name="Lipovich L."/>
            <person name="Liu J."/>
            <person name="Liuni S."/>
            <person name="McWilliam S."/>
            <person name="Madan Babu M."/>
            <person name="Madera M."/>
            <person name="Marchionni L."/>
            <person name="Matsuda H."/>
            <person name="Matsuzawa S."/>
            <person name="Miki H."/>
            <person name="Mignone F."/>
            <person name="Miyake S."/>
            <person name="Morris K."/>
            <person name="Mottagui-Tabar S."/>
            <person name="Mulder N."/>
            <person name="Nakano N."/>
            <person name="Nakauchi H."/>
            <person name="Ng P."/>
            <person name="Nilsson R."/>
            <person name="Nishiguchi S."/>
            <person name="Nishikawa S."/>
            <person name="Nori F."/>
            <person name="Ohara O."/>
            <person name="Okazaki Y."/>
            <person name="Orlando V."/>
            <person name="Pang K.C."/>
            <person name="Pavan W.J."/>
            <person name="Pavesi G."/>
            <person name="Pesole G."/>
            <person name="Petrovsky N."/>
            <person name="Piazza S."/>
            <person name="Reed J."/>
            <person name="Reid J.F."/>
            <person name="Ring B.Z."/>
            <person name="Ringwald M."/>
            <person name="Rost B."/>
            <person name="Ruan Y."/>
            <person name="Salzberg S.L."/>
            <person name="Sandelin A."/>
            <person name="Schneider C."/>
            <person name="Schoenbach C."/>
            <person name="Sekiguchi K."/>
            <person name="Semple C.A."/>
            <person name="Seno S."/>
            <person name="Sessa L."/>
            <person name="Sheng Y."/>
            <person name="Shibata Y."/>
            <person name="Shimada H."/>
            <person name="Shimada K."/>
            <person name="Silva D."/>
            <person name="Sinclair B."/>
            <person name="Sperling S."/>
            <person name="Stupka E."/>
            <person name="Sugiura K."/>
            <person name="Sultana R."/>
            <person name="Takenaka Y."/>
            <person name="Taki K."/>
            <person name="Tammoja K."/>
            <person name="Tan S.L."/>
            <person name="Tang S."/>
            <person name="Taylor M.S."/>
            <person name="Tegner J."/>
            <person name="Teichmann S.A."/>
            <person name="Ueda H.R."/>
            <person name="van Nimwegen E."/>
            <person name="Verardo R."/>
            <person name="Wei C.L."/>
            <person name="Yagi K."/>
            <person name="Yamanishi H."/>
            <person name="Zabarovsky E."/>
            <person name="Zhu S."/>
            <person name="Zimmer A."/>
            <person name="Hide W."/>
            <person name="Bult C."/>
            <person name="Grimmond S.M."/>
            <person name="Teasdale R.D."/>
            <person name="Liu E.T."/>
            <person name="Brusic V."/>
            <person name="Quackenbush J."/>
            <person name="Wahlestedt C."/>
            <person name="Mattick J.S."/>
            <person name="Hume D.A."/>
            <person name="Kai C."/>
            <person name="Sasaki D."/>
            <person name="Tomaru Y."/>
            <person name="Fukuda S."/>
            <person name="Kanamori-Katayama M."/>
            <person name="Suzuki M."/>
            <person name="Aoki J."/>
            <person name="Arakawa T."/>
            <person name="Iida J."/>
            <person name="Imamura K."/>
            <person name="Itoh M."/>
            <person name="Kato T."/>
            <person name="Kawaji H."/>
            <person name="Kawagashira N."/>
            <person name="Kawashima T."/>
            <person name="Kojima M."/>
            <person name="Kondo S."/>
            <person name="Konno H."/>
            <person name="Nakano K."/>
            <person name="Ninomiya N."/>
            <person name="Nishio T."/>
            <person name="Okada M."/>
            <person name="Plessy C."/>
            <person name="Shibata K."/>
            <person name="Shiraki T."/>
            <person name="Suzuki S."/>
            <person name="Tagami M."/>
            <person name="Waki K."/>
            <person name="Watahiki A."/>
            <person name="Okamura-Oho Y."/>
            <person name="Suzuki H."/>
            <person name="Kawai J."/>
            <person name="Hayashizaki Y."/>
        </authorList>
    </citation>
    <scope>NUCLEOTIDE SEQUENCE [LARGE SCALE MRNA] (ISOFORMS 1 AND 2)</scope>
    <source>
        <strain>C57BL/6J</strain>
        <tissue>Head</tissue>
        <tissue>Thymus</tissue>
    </source>
</reference>
<reference key="2">
    <citation type="journal article" date="2004" name="Genome Res.">
        <title>The status, quality, and expansion of the NIH full-length cDNA project: the Mammalian Gene Collection (MGC).</title>
        <authorList>
            <consortium name="The MGC Project Team"/>
        </authorList>
    </citation>
    <scope>NUCLEOTIDE SEQUENCE [LARGE SCALE MRNA] (ISOFORM 3)</scope>
</reference>
<reference key="3">
    <citation type="journal article" date="2010" name="Cell">
        <title>A tissue-specific atlas of mouse protein phosphorylation and expression.</title>
        <authorList>
            <person name="Huttlin E.L."/>
            <person name="Jedrychowski M.P."/>
            <person name="Elias J.E."/>
            <person name="Goswami T."/>
            <person name="Rad R."/>
            <person name="Beausoleil S.A."/>
            <person name="Villen J."/>
            <person name="Haas W."/>
            <person name="Sowa M.E."/>
            <person name="Gygi S.P."/>
        </authorList>
    </citation>
    <scope>IDENTIFICATION BY MASS SPECTROMETRY [LARGE SCALE ANALYSIS]</scope>
    <source>
        <tissue>Brown adipose tissue</tissue>
        <tissue>Heart</tissue>
        <tissue>Kidney</tissue>
        <tissue>Liver</tissue>
        <tissue>Lung</tissue>
        <tissue>Spleen</tissue>
    </source>
</reference>
<reference key="4">
    <citation type="journal article" date="2013" name="Proc. Natl. Acad. Sci. U.S.A.">
        <title>Label-free quantitative proteomics of the lysine acetylome in mitochondria identifies substrates of SIRT3 in metabolic pathways.</title>
        <authorList>
            <person name="Rardin M.J."/>
            <person name="Newman J.C."/>
            <person name="Held J.M."/>
            <person name="Cusack M.P."/>
            <person name="Sorensen D.J."/>
            <person name="Li B."/>
            <person name="Schilling B."/>
            <person name="Mooney S.D."/>
            <person name="Kahn C.R."/>
            <person name="Verdin E."/>
            <person name="Gibson B.W."/>
        </authorList>
    </citation>
    <scope>ACETYLATION [LARGE SCALE ANALYSIS] AT LYS-204</scope>
    <scope>IDENTIFICATION BY MASS SPECTROMETRY [LARGE SCALE ANALYSIS]</scope>
    <source>
        <tissue>Liver</tissue>
    </source>
</reference>
<reference key="5">
    <citation type="journal article" date="2016" name="Cell Rep.">
        <title>MCUR1 is a scaffold factor for the MCU complex function and promotes mitochondrial bioenergetics.</title>
        <authorList>
            <person name="Tomar D."/>
            <person name="Dong Z."/>
            <person name="Shanmughapriya S."/>
            <person name="Koch D.A."/>
            <person name="Thomas T."/>
            <person name="Hoffman N.E."/>
            <person name="Timbalia S.A."/>
            <person name="Goldman S.J."/>
            <person name="Breves S.L."/>
            <person name="Corbally D.P."/>
            <person name="Nemani N."/>
            <person name="Fairweather J.P."/>
            <person name="Cutri A.R."/>
            <person name="Zhang X."/>
            <person name="Song J."/>
            <person name="Jana F."/>
            <person name="Huang J."/>
            <person name="Barrero C."/>
            <person name="Rabinowitz J.E."/>
            <person name="Luongo T.S."/>
            <person name="Schumacher S.M."/>
            <person name="Rockman M.E."/>
            <person name="Dietrich A."/>
            <person name="Merali S."/>
            <person name="Caplan J."/>
            <person name="Stathopulos P."/>
            <person name="Ahima R.S."/>
            <person name="Cheung J.Y."/>
            <person name="Houser S.R."/>
            <person name="Koch W.J."/>
            <person name="Patel V."/>
            <person name="Gohil V.M."/>
            <person name="Elrod J.W."/>
            <person name="Rajan S."/>
            <person name="Madesh M."/>
        </authorList>
    </citation>
    <scope>DISRUPTION PHENOTYPE</scope>
</reference>
<protein>
    <recommendedName>
        <fullName evidence="1">Mitochondrial calcium uniporter regulator 1</fullName>
        <shortName evidence="1">MCU regulator 1</shortName>
    </recommendedName>
    <alternativeName>
        <fullName evidence="7">Coiled-coil domain-containing protein 90A, mitochondrial</fullName>
    </alternativeName>
</protein>
<feature type="chain" id="PRO_0000295693" description="Mitochondrial calcium uniporter regulator 1">
    <location>
        <begin position="1"/>
        <end position="340"/>
    </location>
</feature>
<feature type="topological domain" description="Mitochondrial intermembrane" evidence="1">
    <location>
        <begin position="1"/>
        <end position="54"/>
    </location>
</feature>
<feature type="transmembrane region" description="Helical" evidence="2">
    <location>
        <begin position="55"/>
        <end position="74"/>
    </location>
</feature>
<feature type="topological domain" description="Mitochondrial matrix" evidence="1">
    <location>
        <begin position="75"/>
        <end position="316"/>
    </location>
</feature>
<feature type="transmembrane region" description="Helical" evidence="2">
    <location>
        <begin position="317"/>
        <end position="339"/>
    </location>
</feature>
<feature type="topological domain" description="Mitochondrial intermembrane" evidence="1">
    <location>
        <position position="340"/>
    </location>
</feature>
<feature type="region of interest" description="Disordered" evidence="3">
    <location>
        <begin position="1"/>
        <end position="44"/>
    </location>
</feature>
<feature type="coiled-coil region" evidence="2">
    <location>
        <begin position="197"/>
        <end position="291"/>
    </location>
</feature>
<feature type="modified residue" description="N6-acetyllysine" evidence="9">
    <location>
        <position position="204"/>
    </location>
</feature>
<feature type="splice variant" id="VSP_027000" description="In isoform 3." evidence="5">
    <location>
        <begin position="1"/>
        <end position="180"/>
    </location>
</feature>
<feature type="splice variant" id="VSP_027001" description="In isoform 2." evidence="6">
    <original>YSLNEKKMLELRTEIVSLHA</original>
    <variation>VCSFIKSKSLIYFFLDWNAC</variation>
    <location>
        <begin position="267"/>
        <end position="286"/>
    </location>
</feature>
<feature type="splice variant" id="VSP_027002" description="In isoform 2." evidence="6">
    <location>
        <begin position="287"/>
        <end position="340"/>
    </location>
</feature>
<feature type="sequence conflict" description="In Ref. 1; BAE20607." evidence="7" ref="1">
    <original>A</original>
    <variation>G</variation>
    <location>
        <position position="52"/>
    </location>
</feature>